<name>GPMB_ECOLC</name>
<proteinExistence type="inferred from homology"/>
<sequence length="215" mass="24065">MLQVYLVRHGETQWNAERRIQGQSDSPLTAKGEQQAMQVATRAKELGITHIISSDLGRTRRTAEIIAQACGCDIIFDSRLRELNMGVLEKRHIDSLTEEEENWRRQLVNGTVDGRIPEGESMQELSDRVNAALESCRDLPQGSRPLLVSHGIALGCLVSTILGLPAWAERRLRLRNCSISRVDYQESLWLASGWVVETAGDISHLDAPALDELQR</sequence>
<reference key="1">
    <citation type="submission" date="2008-02" db="EMBL/GenBank/DDBJ databases">
        <title>Complete sequence of Escherichia coli C str. ATCC 8739.</title>
        <authorList>
            <person name="Copeland A."/>
            <person name="Lucas S."/>
            <person name="Lapidus A."/>
            <person name="Glavina del Rio T."/>
            <person name="Dalin E."/>
            <person name="Tice H."/>
            <person name="Bruce D."/>
            <person name="Goodwin L."/>
            <person name="Pitluck S."/>
            <person name="Kiss H."/>
            <person name="Brettin T."/>
            <person name="Detter J.C."/>
            <person name="Han C."/>
            <person name="Kuske C.R."/>
            <person name="Schmutz J."/>
            <person name="Larimer F."/>
            <person name="Land M."/>
            <person name="Hauser L."/>
            <person name="Kyrpides N."/>
            <person name="Mikhailova N."/>
            <person name="Ingram L."/>
            <person name="Richardson P."/>
        </authorList>
    </citation>
    <scope>NUCLEOTIDE SEQUENCE [LARGE SCALE GENOMIC DNA]</scope>
    <source>
        <strain>ATCC 8739 / DSM 1576 / NBRC 3972 / NCIMB 8545 / WDCM 00012 / Crooks</strain>
    </source>
</reference>
<gene>
    <name evidence="1" type="primary">gpmB</name>
    <name type="ordered locus">EcolC_3661</name>
</gene>
<protein>
    <recommendedName>
        <fullName evidence="1">Probable phosphoglycerate mutase GpmB</fullName>
        <ecNumber evidence="1">5.4.2.-</ecNumber>
    </recommendedName>
    <alternativeName>
        <fullName evidence="1">PGAM</fullName>
    </alternativeName>
    <alternativeName>
        <fullName evidence="1">Phosphoglyceromutase</fullName>
    </alternativeName>
</protein>
<accession>B1IS24</accession>
<comment type="catalytic activity">
    <reaction evidence="1">
        <text>(2R)-2-phosphoglycerate = (2R)-3-phosphoglycerate</text>
        <dbReference type="Rhea" id="RHEA:15901"/>
        <dbReference type="ChEBI" id="CHEBI:58272"/>
        <dbReference type="ChEBI" id="CHEBI:58289"/>
    </reaction>
</comment>
<comment type="pathway">
    <text evidence="1">Carbohydrate degradation; glycolysis; pyruvate from D-glyceraldehyde 3-phosphate: step 3/5.</text>
</comment>
<comment type="similarity">
    <text evidence="1">Belongs to the phosphoglycerate mutase family. GpmB subfamily.</text>
</comment>
<evidence type="ECO:0000255" key="1">
    <source>
        <dbReference type="HAMAP-Rule" id="MF_01040"/>
    </source>
</evidence>
<organism>
    <name type="scientific">Escherichia coli (strain ATCC 8739 / DSM 1576 / NBRC 3972 / NCIMB 8545 / WDCM 00012 / Crooks)</name>
    <dbReference type="NCBI Taxonomy" id="481805"/>
    <lineage>
        <taxon>Bacteria</taxon>
        <taxon>Pseudomonadati</taxon>
        <taxon>Pseudomonadota</taxon>
        <taxon>Gammaproteobacteria</taxon>
        <taxon>Enterobacterales</taxon>
        <taxon>Enterobacteriaceae</taxon>
        <taxon>Escherichia</taxon>
    </lineage>
</organism>
<dbReference type="EC" id="5.4.2.-" evidence="1"/>
<dbReference type="EMBL" id="CP000946">
    <property type="protein sequence ID" value="ACA79272.1"/>
    <property type="molecule type" value="Genomic_DNA"/>
</dbReference>
<dbReference type="RefSeq" id="WP_000942344.1">
    <property type="nucleotide sequence ID" value="NZ_MTFT01000024.1"/>
</dbReference>
<dbReference type="SMR" id="B1IS24"/>
<dbReference type="GeneID" id="93777450"/>
<dbReference type="KEGG" id="ecl:EcolC_3661"/>
<dbReference type="HOGENOM" id="CLU_033323_9_5_6"/>
<dbReference type="UniPathway" id="UPA00109">
    <property type="reaction ID" value="UER00186"/>
</dbReference>
<dbReference type="GO" id="GO:0005737">
    <property type="term" value="C:cytoplasm"/>
    <property type="evidence" value="ECO:0007669"/>
    <property type="project" value="TreeGrafter"/>
</dbReference>
<dbReference type="GO" id="GO:0016791">
    <property type="term" value="F:phosphatase activity"/>
    <property type="evidence" value="ECO:0007669"/>
    <property type="project" value="TreeGrafter"/>
</dbReference>
<dbReference type="GO" id="GO:0004619">
    <property type="term" value="F:phosphoglycerate mutase activity"/>
    <property type="evidence" value="ECO:0007669"/>
    <property type="project" value="UniProtKB-UniRule"/>
</dbReference>
<dbReference type="GO" id="GO:0006096">
    <property type="term" value="P:glycolytic process"/>
    <property type="evidence" value="ECO:0007669"/>
    <property type="project" value="UniProtKB-UniRule"/>
</dbReference>
<dbReference type="CDD" id="cd07067">
    <property type="entry name" value="HP_PGM_like"/>
    <property type="match status" value="1"/>
</dbReference>
<dbReference type="Gene3D" id="3.40.50.1240">
    <property type="entry name" value="Phosphoglycerate mutase-like"/>
    <property type="match status" value="1"/>
</dbReference>
<dbReference type="HAMAP" id="MF_01040">
    <property type="entry name" value="PGAM_GpmB"/>
    <property type="match status" value="1"/>
</dbReference>
<dbReference type="InterPro" id="IPR013078">
    <property type="entry name" value="His_Pase_superF_clade-1"/>
</dbReference>
<dbReference type="InterPro" id="IPR029033">
    <property type="entry name" value="His_PPase_superfam"/>
</dbReference>
<dbReference type="InterPro" id="IPR001345">
    <property type="entry name" value="PG/BPGM_mutase_AS"/>
</dbReference>
<dbReference type="InterPro" id="IPR050275">
    <property type="entry name" value="PGM_Phosphatase"/>
</dbReference>
<dbReference type="InterPro" id="IPR023086">
    <property type="entry name" value="Phosphoglycerate_mutase_GpmB"/>
</dbReference>
<dbReference type="NCBIfam" id="NF002901">
    <property type="entry name" value="PRK03482.1"/>
    <property type="match status" value="1"/>
</dbReference>
<dbReference type="PANTHER" id="PTHR48100">
    <property type="entry name" value="BROAD-SPECIFICITY PHOSPHATASE YOR283W-RELATED"/>
    <property type="match status" value="1"/>
</dbReference>
<dbReference type="PANTHER" id="PTHR48100:SF1">
    <property type="entry name" value="HISTIDINE PHOSPHATASE FAMILY PROTEIN-RELATED"/>
    <property type="match status" value="1"/>
</dbReference>
<dbReference type="Pfam" id="PF00300">
    <property type="entry name" value="His_Phos_1"/>
    <property type="match status" value="1"/>
</dbReference>
<dbReference type="SMART" id="SM00855">
    <property type="entry name" value="PGAM"/>
    <property type="match status" value="1"/>
</dbReference>
<dbReference type="SUPFAM" id="SSF53254">
    <property type="entry name" value="Phosphoglycerate mutase-like"/>
    <property type="match status" value="1"/>
</dbReference>
<dbReference type="PROSITE" id="PS00175">
    <property type="entry name" value="PG_MUTASE"/>
    <property type="match status" value="1"/>
</dbReference>
<keyword id="KW-0324">Glycolysis</keyword>
<keyword id="KW-0413">Isomerase</keyword>
<feature type="chain" id="PRO_1000084335" description="Probable phosphoglycerate mutase GpmB">
    <location>
        <begin position="1"/>
        <end position="215"/>
    </location>
</feature>
<feature type="active site" description="Tele-phosphohistidine intermediate" evidence="1">
    <location>
        <position position="9"/>
    </location>
</feature>
<feature type="active site" description="Proton donor/acceptor" evidence="1">
    <location>
        <position position="82"/>
    </location>
</feature>
<feature type="binding site" evidence="1">
    <location>
        <begin position="8"/>
        <end position="15"/>
    </location>
    <ligand>
        <name>substrate</name>
    </ligand>
</feature>
<feature type="binding site" evidence="1">
    <location>
        <begin position="21"/>
        <end position="22"/>
    </location>
    <ligand>
        <name>substrate</name>
    </ligand>
</feature>
<feature type="binding site" evidence="1">
    <location>
        <position position="58"/>
    </location>
    <ligand>
        <name>substrate</name>
    </ligand>
</feature>
<feature type="binding site" evidence="1">
    <location>
        <position position="60"/>
    </location>
    <ligand>
        <name>substrate</name>
    </ligand>
</feature>
<feature type="binding site" evidence="1">
    <location>
        <begin position="82"/>
        <end position="85"/>
    </location>
    <ligand>
        <name>substrate</name>
    </ligand>
</feature>
<feature type="binding site" evidence="1">
    <location>
        <begin position="104"/>
        <end position="105"/>
    </location>
    <ligand>
        <name>substrate</name>
    </ligand>
</feature>
<feature type="binding site" evidence="1">
    <location>
        <begin position="151"/>
        <end position="152"/>
    </location>
    <ligand>
        <name>substrate</name>
    </ligand>
</feature>
<feature type="site" description="Transition state stabilizer" evidence="1">
    <location>
        <position position="150"/>
    </location>
</feature>